<evidence type="ECO:0000255" key="1">
    <source>
        <dbReference type="HAMAP-Rule" id="MF_01249"/>
    </source>
</evidence>
<gene>
    <name evidence="1" type="primary">hprK</name>
    <name type="ordered locus">Rmet_0299</name>
</gene>
<dbReference type="EC" id="2.7.11.-" evidence="1"/>
<dbReference type="EC" id="2.7.4.-" evidence="1"/>
<dbReference type="EMBL" id="CP000352">
    <property type="protein sequence ID" value="ABF07185.1"/>
    <property type="molecule type" value="Genomic_DNA"/>
</dbReference>
<dbReference type="RefSeq" id="WP_008650955.1">
    <property type="nucleotide sequence ID" value="NC_007973.1"/>
</dbReference>
<dbReference type="SMR" id="Q1LRP1"/>
<dbReference type="STRING" id="266264.Rmet_0299"/>
<dbReference type="GeneID" id="92819237"/>
<dbReference type="KEGG" id="rme:Rmet_0299"/>
<dbReference type="eggNOG" id="COG1493">
    <property type="taxonomic scope" value="Bacteria"/>
</dbReference>
<dbReference type="HOGENOM" id="CLU_052030_0_2_4"/>
<dbReference type="Proteomes" id="UP000002429">
    <property type="component" value="Chromosome"/>
</dbReference>
<dbReference type="GO" id="GO:0005524">
    <property type="term" value="F:ATP binding"/>
    <property type="evidence" value="ECO:0007669"/>
    <property type="project" value="UniProtKB-UniRule"/>
</dbReference>
<dbReference type="GO" id="GO:0000287">
    <property type="term" value="F:magnesium ion binding"/>
    <property type="evidence" value="ECO:0007669"/>
    <property type="project" value="UniProtKB-UniRule"/>
</dbReference>
<dbReference type="GO" id="GO:0000155">
    <property type="term" value="F:phosphorelay sensor kinase activity"/>
    <property type="evidence" value="ECO:0007669"/>
    <property type="project" value="InterPro"/>
</dbReference>
<dbReference type="GO" id="GO:0004674">
    <property type="term" value="F:protein serine/threonine kinase activity"/>
    <property type="evidence" value="ECO:0007669"/>
    <property type="project" value="UniProtKB-KW"/>
</dbReference>
<dbReference type="GO" id="GO:0004712">
    <property type="term" value="F:protein serine/threonine/tyrosine kinase activity"/>
    <property type="evidence" value="ECO:0007669"/>
    <property type="project" value="UniProtKB-UniRule"/>
</dbReference>
<dbReference type="GO" id="GO:0006109">
    <property type="term" value="P:regulation of carbohydrate metabolic process"/>
    <property type="evidence" value="ECO:0007669"/>
    <property type="project" value="UniProtKB-UniRule"/>
</dbReference>
<dbReference type="CDD" id="cd01918">
    <property type="entry name" value="HprK_C"/>
    <property type="match status" value="1"/>
</dbReference>
<dbReference type="FunFam" id="3.40.50.300:FF:000174">
    <property type="entry name" value="HPr kinase/phosphorylase"/>
    <property type="match status" value="1"/>
</dbReference>
<dbReference type="Gene3D" id="3.40.1390.20">
    <property type="entry name" value="HprK N-terminal domain-like"/>
    <property type="match status" value="1"/>
</dbReference>
<dbReference type="Gene3D" id="3.40.50.300">
    <property type="entry name" value="P-loop containing nucleotide triphosphate hydrolases"/>
    <property type="match status" value="1"/>
</dbReference>
<dbReference type="HAMAP" id="MF_01249">
    <property type="entry name" value="HPr_kinase"/>
    <property type="match status" value="1"/>
</dbReference>
<dbReference type="InterPro" id="IPR003755">
    <property type="entry name" value="HPr(Ser)_kin/Pase"/>
</dbReference>
<dbReference type="InterPro" id="IPR011104">
    <property type="entry name" value="Hpr_kin/Pase_C"/>
</dbReference>
<dbReference type="InterPro" id="IPR011126">
    <property type="entry name" value="Hpr_kin/Pase_Hpr_N"/>
</dbReference>
<dbReference type="InterPro" id="IPR027417">
    <property type="entry name" value="P-loop_NTPase"/>
</dbReference>
<dbReference type="InterPro" id="IPR028979">
    <property type="entry name" value="Ser_kin/Pase_Hpr-like_N_sf"/>
</dbReference>
<dbReference type="NCBIfam" id="TIGR00679">
    <property type="entry name" value="hpr-ser"/>
    <property type="match status" value="1"/>
</dbReference>
<dbReference type="PANTHER" id="PTHR30305:SF1">
    <property type="entry name" value="HPR KINASE_PHOSPHORYLASE"/>
    <property type="match status" value="1"/>
</dbReference>
<dbReference type="PANTHER" id="PTHR30305">
    <property type="entry name" value="PROTEIN YJDM-RELATED"/>
    <property type="match status" value="1"/>
</dbReference>
<dbReference type="Pfam" id="PF07475">
    <property type="entry name" value="Hpr_kinase_C"/>
    <property type="match status" value="1"/>
</dbReference>
<dbReference type="Pfam" id="PF02603">
    <property type="entry name" value="Hpr_kinase_N"/>
    <property type="match status" value="1"/>
</dbReference>
<dbReference type="SUPFAM" id="SSF75138">
    <property type="entry name" value="HprK N-terminal domain-like"/>
    <property type="match status" value="1"/>
</dbReference>
<dbReference type="SUPFAM" id="SSF53795">
    <property type="entry name" value="PEP carboxykinase-like"/>
    <property type="match status" value="1"/>
</dbReference>
<reference key="1">
    <citation type="journal article" date="2010" name="PLoS ONE">
        <title>The complete genome sequence of Cupriavidus metallidurans strain CH34, a master survivalist in harsh and anthropogenic environments.</title>
        <authorList>
            <person name="Janssen P.J."/>
            <person name="Van Houdt R."/>
            <person name="Moors H."/>
            <person name="Monsieurs P."/>
            <person name="Morin N."/>
            <person name="Michaux A."/>
            <person name="Benotmane M.A."/>
            <person name="Leys N."/>
            <person name="Vallaeys T."/>
            <person name="Lapidus A."/>
            <person name="Monchy S."/>
            <person name="Medigue C."/>
            <person name="Taghavi S."/>
            <person name="McCorkle S."/>
            <person name="Dunn J."/>
            <person name="van der Lelie D."/>
            <person name="Mergeay M."/>
        </authorList>
    </citation>
    <scope>NUCLEOTIDE SEQUENCE [LARGE SCALE GENOMIC DNA]</scope>
    <source>
        <strain>ATCC 43123 / DSM 2839 / NBRC 102507 / CH34</strain>
    </source>
</reference>
<accession>Q1LRP1</accession>
<organism>
    <name type="scientific">Cupriavidus metallidurans (strain ATCC 43123 / DSM 2839 / NBRC 102507 / CH34)</name>
    <name type="common">Ralstonia metallidurans</name>
    <dbReference type="NCBI Taxonomy" id="266264"/>
    <lineage>
        <taxon>Bacteria</taxon>
        <taxon>Pseudomonadati</taxon>
        <taxon>Pseudomonadota</taxon>
        <taxon>Betaproteobacteria</taxon>
        <taxon>Burkholderiales</taxon>
        <taxon>Burkholderiaceae</taxon>
        <taxon>Cupriavidus</taxon>
    </lineage>
</organism>
<sequence>MELTGVTSQSIFDDNAADIKLSWVAGLEGADRAFDVEFAREATSAADLVGHLNLIHPNRIQVLGKPEILYYQRLDDEPRKRQMGELILLEPPFLVVADGMEPPPDLELRCTRSSTPLFTTPVSSAAVIDHLRLYLSRISAPRVTMHGVFLDILGMGVLIMGESGLGKSELGLELISRGHGLVADDAVDFVRLGPDFIEGRCPPLLQNLLEVRGLGLLDIKTIFGETAVRRKMKLKLVVQLVRRNDGEFERLPLDSQYLDVLGLPIHMVKIQVAAGRNLAVLVEAAVRNTILRLRGIDTLRDFMDRQRAAMQADVVSRGQGRLL</sequence>
<comment type="function">
    <text evidence="1">Catalyzes the ATP- as well as the pyrophosphate-dependent phosphorylation of a specific serine residue in HPr, a phosphocarrier protein of the phosphoenolpyruvate-dependent sugar phosphotransferase system (PTS). HprK/P also catalyzes the pyrophosphate-producing, inorganic phosphate-dependent dephosphorylation (phosphorolysis) of seryl-phosphorylated HPr (P-Ser-HPr).</text>
</comment>
<comment type="catalytic activity">
    <reaction evidence="1">
        <text>[HPr protein]-L-serine + ATP = [HPr protein]-O-phospho-L-serine + ADP + H(+)</text>
        <dbReference type="Rhea" id="RHEA:46600"/>
        <dbReference type="Rhea" id="RHEA-COMP:11602"/>
        <dbReference type="Rhea" id="RHEA-COMP:11603"/>
        <dbReference type="ChEBI" id="CHEBI:15378"/>
        <dbReference type="ChEBI" id="CHEBI:29999"/>
        <dbReference type="ChEBI" id="CHEBI:30616"/>
        <dbReference type="ChEBI" id="CHEBI:83421"/>
        <dbReference type="ChEBI" id="CHEBI:456216"/>
    </reaction>
</comment>
<comment type="catalytic activity">
    <reaction evidence="1">
        <text>[HPr protein]-O-phospho-L-serine + phosphate + H(+) = [HPr protein]-L-serine + diphosphate</text>
        <dbReference type="Rhea" id="RHEA:46604"/>
        <dbReference type="Rhea" id="RHEA-COMP:11602"/>
        <dbReference type="Rhea" id="RHEA-COMP:11603"/>
        <dbReference type="ChEBI" id="CHEBI:15378"/>
        <dbReference type="ChEBI" id="CHEBI:29999"/>
        <dbReference type="ChEBI" id="CHEBI:33019"/>
        <dbReference type="ChEBI" id="CHEBI:43474"/>
        <dbReference type="ChEBI" id="CHEBI:83421"/>
    </reaction>
</comment>
<comment type="cofactor">
    <cofactor evidence="1">
        <name>Mg(2+)</name>
        <dbReference type="ChEBI" id="CHEBI:18420"/>
    </cofactor>
</comment>
<comment type="subunit">
    <text evidence="1">Homohexamer.</text>
</comment>
<comment type="domain">
    <text evidence="1">The Walker A ATP-binding motif also binds Pi and PPi.</text>
</comment>
<comment type="miscellaneous">
    <text evidence="1">Both phosphorylation and phosphorolysis are carried out by the same active site and suggest a common mechanism for both reactions.</text>
</comment>
<comment type="similarity">
    <text evidence="1">Belongs to the HPrK/P family.</text>
</comment>
<proteinExistence type="inferred from homology"/>
<feature type="chain" id="PRO_1000067169" description="HPr kinase/phosphorylase">
    <location>
        <begin position="1"/>
        <end position="323"/>
    </location>
</feature>
<feature type="region of interest" description="Important for the catalytic mechanism of both phosphorylation and dephosphorylation" evidence="1">
    <location>
        <begin position="209"/>
        <end position="218"/>
    </location>
</feature>
<feature type="region of interest" description="Important for the catalytic mechanism of dephosphorylation" evidence="1">
    <location>
        <begin position="271"/>
        <end position="276"/>
    </location>
</feature>
<feature type="active site" evidence="1">
    <location>
        <position position="146"/>
    </location>
</feature>
<feature type="active site" evidence="1">
    <location>
        <position position="167"/>
    </location>
</feature>
<feature type="active site" description="Proton acceptor; for phosphorylation activity. Proton donor; for dephosphorylation activity" evidence="1">
    <location>
        <position position="185"/>
    </location>
</feature>
<feature type="active site" evidence="1">
    <location>
        <position position="250"/>
    </location>
</feature>
<feature type="binding site" evidence="1">
    <location>
        <begin position="161"/>
        <end position="168"/>
    </location>
    <ligand>
        <name>ATP</name>
        <dbReference type="ChEBI" id="CHEBI:30616"/>
    </ligand>
</feature>
<feature type="binding site" evidence="1">
    <location>
        <position position="168"/>
    </location>
    <ligand>
        <name>Mg(2+)</name>
        <dbReference type="ChEBI" id="CHEBI:18420"/>
    </ligand>
</feature>
<feature type="binding site" evidence="1">
    <location>
        <position position="210"/>
    </location>
    <ligand>
        <name>Mg(2+)</name>
        <dbReference type="ChEBI" id="CHEBI:18420"/>
    </ligand>
</feature>
<protein>
    <recommendedName>
        <fullName evidence="1">HPr kinase/phosphorylase</fullName>
        <shortName evidence="1">HPrK/P</shortName>
        <ecNumber evidence="1">2.7.11.-</ecNumber>
        <ecNumber evidence="1">2.7.4.-</ecNumber>
    </recommendedName>
    <alternativeName>
        <fullName evidence="1">HPr(Ser) kinase/phosphorylase</fullName>
    </alternativeName>
</protein>
<name>HPRK_CUPMC</name>
<keyword id="KW-0067">ATP-binding</keyword>
<keyword id="KW-0418">Kinase</keyword>
<keyword id="KW-0460">Magnesium</keyword>
<keyword id="KW-0479">Metal-binding</keyword>
<keyword id="KW-0511">Multifunctional enzyme</keyword>
<keyword id="KW-0547">Nucleotide-binding</keyword>
<keyword id="KW-1185">Reference proteome</keyword>
<keyword id="KW-0723">Serine/threonine-protein kinase</keyword>
<keyword id="KW-0808">Transferase</keyword>